<feature type="chain" id="PRO_0000269843" description="BLOC-1-related complex subunit 8">
    <location>
        <begin position="1"/>
        <end position="119"/>
    </location>
</feature>
<feature type="modified residue" description="Phosphoserine" evidence="7">
    <location>
        <position position="109"/>
    </location>
</feature>
<feature type="splice variant" id="VSP_022103" description="In isoform 2." evidence="3">
    <original>S</original>
    <variation>R</variation>
    <location>
        <position position="109"/>
    </location>
</feature>
<feature type="splice variant" id="VSP_022104" description="In isoform 2." evidence="3">
    <location>
        <begin position="110"/>
        <end position="119"/>
    </location>
</feature>
<feature type="sequence variant" id="VAR_090100" description="In NDOABA; likely pathogenic; decreased function in lysosome localization to peripheral cytoplasm; contrary to the wild type, the mutant does not fully rescue defects in lysosomal distribution in BORCS8-deficient cells." evidence="2">
    <original>S</original>
    <variation>P</variation>
    <location>
        <position position="29"/>
    </location>
</feature>
<feature type="sequence variant" id="VAR_090101" description="In NDOABA; uncertain significance; decreased function in lysosome localization to peripheral cytoplasm; contrary to the wild type, the mutant does not rescue defects in lysosomal distribution in BORCS8-deficient cells; reduced interaction with BORCS5 and BORCS7." evidence="2">
    <original>S</original>
    <variation>P</variation>
    <location>
        <position position="42"/>
    </location>
</feature>
<feature type="sequence variant" id="VAR_090102" description="In NDOABA; uncertain significance; decreased function in lysosome localization to peripheral cytoplasm; contrary to the wild type, the mutant does not fully rescue defects in lysosomal distribution in BORCS8-deficient cells; reduced interaction with BORCS5 and BORCS7." evidence="2">
    <original>T</original>
    <variation>P</variation>
    <location>
        <position position="66"/>
    </location>
</feature>
<accession>Q96FH0</accession>
<accession>B2RXF9</accession>
<accession>Q9BT01</accession>
<proteinExistence type="evidence at protein level"/>
<organism>
    <name type="scientific">Homo sapiens</name>
    <name type="common">Human</name>
    <dbReference type="NCBI Taxonomy" id="9606"/>
    <lineage>
        <taxon>Eukaryota</taxon>
        <taxon>Metazoa</taxon>
        <taxon>Chordata</taxon>
        <taxon>Craniata</taxon>
        <taxon>Vertebrata</taxon>
        <taxon>Euteleostomi</taxon>
        <taxon>Mammalia</taxon>
        <taxon>Eutheria</taxon>
        <taxon>Euarchontoglires</taxon>
        <taxon>Primates</taxon>
        <taxon>Haplorrhini</taxon>
        <taxon>Catarrhini</taxon>
        <taxon>Hominidae</taxon>
        <taxon>Homo</taxon>
    </lineage>
</organism>
<name>BORC8_HUMAN</name>
<dbReference type="EMBL" id="BC004449">
    <property type="protein sequence ID" value="AAH04449.1"/>
    <property type="molecule type" value="mRNA"/>
</dbReference>
<dbReference type="EMBL" id="BC010931">
    <property type="status" value="NOT_ANNOTATED_CDS"/>
    <property type="molecule type" value="mRNA"/>
</dbReference>
<dbReference type="EMBL" id="BC157837">
    <property type="protein sequence ID" value="AAI57838.1"/>
    <property type="molecule type" value="mRNA"/>
</dbReference>
<dbReference type="EMBL" id="BC157868">
    <property type="protein sequence ID" value="AAI57869.1"/>
    <property type="molecule type" value="mRNA"/>
</dbReference>
<dbReference type="CCDS" id="CCDS46025.1">
    <molecule id="Q96FH0-1"/>
</dbReference>
<dbReference type="CCDS" id="CCDS54235.1">
    <molecule id="Q96FH0-2"/>
</dbReference>
<dbReference type="RefSeq" id="NP_001139255.1">
    <molecule id="Q96FH0-2"/>
    <property type="nucleotide sequence ID" value="NM_001145783.2"/>
</dbReference>
<dbReference type="RefSeq" id="NP_001139256.1">
    <molecule id="Q96FH0-1"/>
    <property type="nucleotide sequence ID" value="NM_001145784.2"/>
</dbReference>
<dbReference type="SMR" id="Q96FH0"/>
<dbReference type="BioGRID" id="610381">
    <property type="interactions" value="47"/>
</dbReference>
<dbReference type="ComplexPortal" id="CPX-5029">
    <property type="entry name" value="BORC complex"/>
</dbReference>
<dbReference type="CORUM" id="Q96FH0"/>
<dbReference type="FunCoup" id="Q96FH0">
    <property type="interactions" value="229"/>
</dbReference>
<dbReference type="IntAct" id="Q96FH0">
    <property type="interactions" value="40"/>
</dbReference>
<dbReference type="MINT" id="Q96FH0"/>
<dbReference type="STRING" id="9606.ENSP00000425864"/>
<dbReference type="iPTMnet" id="Q96FH0"/>
<dbReference type="PhosphoSitePlus" id="Q96FH0"/>
<dbReference type="BioMuta" id="BORCS8"/>
<dbReference type="DMDM" id="74731704"/>
<dbReference type="jPOST" id="Q96FH0"/>
<dbReference type="MassIVE" id="Q96FH0"/>
<dbReference type="PaxDb" id="9606-ENSP00000425864"/>
<dbReference type="PeptideAtlas" id="Q96FH0"/>
<dbReference type="ProteomicsDB" id="76530">
    <molecule id="Q96FH0-1"/>
</dbReference>
<dbReference type="ProteomicsDB" id="76531">
    <molecule id="Q96FH0-2"/>
</dbReference>
<dbReference type="Pumba" id="Q96FH0"/>
<dbReference type="Antibodypedia" id="47987">
    <property type="antibodies" value="94 antibodies from 14 providers"/>
</dbReference>
<dbReference type="DNASU" id="729991"/>
<dbReference type="Ensembl" id="ENST00000462790.8">
    <molecule id="Q96FH0-1"/>
    <property type="protein sequence ID" value="ENSP00000425864.1"/>
    <property type="gene ID" value="ENSG00000254901.8"/>
</dbReference>
<dbReference type="Ensembl" id="ENST00000477565.3">
    <molecule id="Q96FH0-2"/>
    <property type="protein sequence ID" value="ENSP00000424833.1"/>
    <property type="gene ID" value="ENSG00000254901.8"/>
</dbReference>
<dbReference type="Ensembl" id="ENST00000488252.6">
    <molecule id="Q96FH0-1"/>
    <property type="protein sequence ID" value="ENSP00000467744.1"/>
    <property type="gene ID" value="ENSG00000254901.8"/>
</dbReference>
<dbReference type="GeneID" id="729991"/>
<dbReference type="KEGG" id="hsa:729991"/>
<dbReference type="MANE-Select" id="ENST00000462790.8">
    <property type="protein sequence ID" value="ENSP00000425864.1"/>
    <property type="RefSeq nucleotide sequence ID" value="NM_001145784.2"/>
    <property type="RefSeq protein sequence ID" value="NP_001139256.1"/>
</dbReference>
<dbReference type="UCSC" id="uc002nlq.4">
    <molecule id="Q96FH0-1"/>
    <property type="organism name" value="human"/>
</dbReference>
<dbReference type="AGR" id="HGNC:37247"/>
<dbReference type="CTD" id="729991"/>
<dbReference type="DisGeNET" id="729991"/>
<dbReference type="GeneCards" id="BORCS8"/>
<dbReference type="HGNC" id="HGNC:37247">
    <property type="gene designation" value="BORCS8"/>
</dbReference>
<dbReference type="HPA" id="ENSG00000254901">
    <property type="expression patterns" value="Low tissue specificity"/>
</dbReference>
<dbReference type="MalaCards" id="BORCS8"/>
<dbReference type="MIM" id="616601">
    <property type="type" value="gene"/>
</dbReference>
<dbReference type="MIM" id="620987">
    <property type="type" value="phenotype"/>
</dbReference>
<dbReference type="neXtProt" id="NX_Q96FH0"/>
<dbReference type="OpenTargets" id="ENSG00000064489"/>
<dbReference type="OpenTargets" id="ENSG00000254901"/>
<dbReference type="VEuPathDB" id="HostDB:ENSG00000254901"/>
<dbReference type="eggNOG" id="KOG4523">
    <property type="taxonomic scope" value="Eukaryota"/>
</dbReference>
<dbReference type="GeneTree" id="ENSGT00390000014856"/>
<dbReference type="HOGENOM" id="CLU_151479_0_0_1"/>
<dbReference type="InParanoid" id="Q96FH0"/>
<dbReference type="OMA" id="INIRDHM"/>
<dbReference type="OrthoDB" id="10044187at2759"/>
<dbReference type="PAN-GO" id="Q96FH0">
    <property type="GO annotations" value="1 GO annotation based on evolutionary models"/>
</dbReference>
<dbReference type="PhylomeDB" id="Q96FH0"/>
<dbReference type="TreeFam" id="TF313931"/>
<dbReference type="PathwayCommons" id="Q96FH0"/>
<dbReference type="SignaLink" id="Q96FH0"/>
<dbReference type="BioGRID-ORCS" id="729991">
    <property type="hits" value="75 hits in 1147 CRISPR screens"/>
</dbReference>
<dbReference type="GenomeRNAi" id="729991"/>
<dbReference type="Pharos" id="Q96FH0">
    <property type="development level" value="Tdark"/>
</dbReference>
<dbReference type="PRO" id="PR:Q96FH0"/>
<dbReference type="Proteomes" id="UP000005640">
    <property type="component" value="Chromosome 19"/>
</dbReference>
<dbReference type="RNAct" id="Q96FH0">
    <property type="molecule type" value="protein"/>
</dbReference>
<dbReference type="Bgee" id="ENSG00000254901">
    <property type="expression patterns" value="Expressed in prefrontal cortex and 177 other cell types or tissues"/>
</dbReference>
<dbReference type="ExpressionAtlas" id="Q96FH0">
    <property type="expression patterns" value="baseline and differential"/>
</dbReference>
<dbReference type="GO" id="GO:0099078">
    <property type="term" value="C:BORC complex"/>
    <property type="evidence" value="ECO:0000314"/>
    <property type="project" value="UniProtKB"/>
</dbReference>
<dbReference type="GO" id="GO:0098574">
    <property type="term" value="C:cytoplasmic side of lysosomal membrane"/>
    <property type="evidence" value="ECO:0000303"/>
    <property type="project" value="ComplexPortal"/>
</dbReference>
<dbReference type="GO" id="GO:0007507">
    <property type="term" value="P:heart development"/>
    <property type="evidence" value="ECO:0000270"/>
    <property type="project" value="UniProtKB"/>
</dbReference>
<dbReference type="GO" id="GO:0032418">
    <property type="term" value="P:lysosome localization"/>
    <property type="evidence" value="ECO:0000303"/>
    <property type="project" value="ComplexPortal"/>
</dbReference>
<dbReference type="GO" id="GO:0072384">
    <property type="term" value="P:organelle transport along microtubule"/>
    <property type="evidence" value="ECO:0000303"/>
    <property type="project" value="ComplexPortal"/>
</dbReference>
<dbReference type="GO" id="GO:0051036">
    <property type="term" value="P:regulation of endosome size"/>
    <property type="evidence" value="ECO:0000303"/>
    <property type="project" value="ComplexPortal"/>
</dbReference>
<dbReference type="GO" id="GO:0062196">
    <property type="term" value="P:regulation of lysosome size"/>
    <property type="evidence" value="ECO:0000303"/>
    <property type="project" value="ComplexPortal"/>
</dbReference>
<dbReference type="InterPro" id="IPR019320">
    <property type="entry name" value="BORCS8"/>
</dbReference>
<dbReference type="PANTHER" id="PTHR21146:SF0">
    <property type="entry name" value="BLOC-1-RELATED COMPLEX SUBUNIT 8"/>
    <property type="match status" value="1"/>
</dbReference>
<dbReference type="PANTHER" id="PTHR21146">
    <property type="entry name" value="MEF2B PROTEIN"/>
    <property type="match status" value="1"/>
</dbReference>
<dbReference type="Pfam" id="PF10167">
    <property type="entry name" value="BORCS8"/>
    <property type="match status" value="1"/>
</dbReference>
<comment type="function">
    <text evidence="2 5">As part of the BLOC-one-related complex (BORC), it plays a role in the movement and localization of lysosomes at the cell periphery (PubMed:25898167, PubMed:38128568). Associated with the cytosolic face of lysosomes, BORC recruits ARL8B to the lysosomal membrane and couples lysosomes to microtubule plus-end-directed kinesin motors, driving lysosome movement toward the cell periphery.</text>
</comment>
<comment type="subunit">
    <text evidence="1">Component of the BLOC-one-related complex (BORC) which is composed of BLOC1S1, BLOC1S2, BORCS5, BORCS6, BORCS7, BORCS8, KXD1 and SNAPIN.</text>
</comment>
<comment type="interaction">
    <interactant intactId="EBI-744076">
        <id>Q96FH0</id>
    </interactant>
    <interactant intactId="EBI-712648">
        <id>O95994</id>
        <label>AGR2</label>
    </interactant>
    <organismsDiffer>false</organismsDiffer>
    <experiments>3</experiments>
</comment>
<comment type="interaction">
    <interactant intactId="EBI-744076">
        <id>Q96FH0</id>
    </interactant>
    <interactant intactId="EBI-1188472">
        <id>P78358</id>
        <label>CTAG1B</label>
    </interactant>
    <organismsDiffer>false</organismsDiffer>
    <experiments>5</experiments>
</comment>
<comment type="interaction">
    <interactant intactId="EBI-744076">
        <id>Q96FH0</id>
    </interactant>
    <interactant intactId="EBI-6165891">
        <id>Q14696</id>
        <label>MESD</label>
    </interactant>
    <organismsDiffer>false</organismsDiffer>
    <experiments>3</experiments>
</comment>
<comment type="interaction">
    <interactant intactId="EBI-744076">
        <id>Q96FH0</id>
    </interactant>
    <interactant intactId="EBI-742397">
        <id>Q8IYF3</id>
        <label>TEX11</label>
    </interactant>
    <organismsDiffer>false</organismsDiffer>
    <experiments>5</experiments>
</comment>
<comment type="interaction">
    <interactant intactId="EBI-744076">
        <id>Q96FH0</id>
    </interactant>
    <interactant intactId="EBI-11523345">
        <id>Q8IYF3-3</id>
        <label>TEX11</label>
    </interactant>
    <organismsDiffer>false</organismsDiffer>
    <experiments>5</experiments>
</comment>
<comment type="subcellular location">
    <subcellularLocation>
        <location evidence="5">Lysosome membrane</location>
    </subcellularLocation>
</comment>
<comment type="alternative products">
    <event type="alternative splicing"/>
    <isoform>
        <id>Q96FH0-1</id>
        <name>1</name>
        <sequence type="displayed"/>
    </isoform>
    <isoform>
        <id>Q96FH0-2</id>
        <name>2</name>
        <sequence type="described" ref="VSP_022103 VSP_022104"/>
    </isoform>
</comment>
<comment type="disease" evidence="2">
    <disease id="DI-06961">
        <name>Neurodegeneration, infantile-onset, with optic atrophy and brain abnormalities</name>
        <acronym>NDOABA</acronym>
        <description>An autosomal recessive, severe early-infantile disorder characterized by global developmental delay, severe to profound intellectual disability, hypotonia, limb spasticity, muscle wasting, dysmorphic facies, optic atrophy, leuko-axonopathy with hypomyelination, and neurodegenerative features with prevalent supratentorial involvement.</description>
        <dbReference type="MIM" id="620987"/>
    </disease>
    <text>The disease is caused by variants affecting the gene represented in this entry.</text>
</comment>
<comment type="similarity">
    <text evidence="4">Belongs to the BORCS8 family.</text>
</comment>
<comment type="caution">
    <text evidence="4">The gene for this protein is either identical to or adjacent to that of MEF2B. Some mRNAs that encode this protein also include MEF2B.</text>
</comment>
<protein>
    <recommendedName>
        <fullName evidence="4">BLOC-1-related complex subunit 8</fullName>
    </recommendedName>
    <alternativeName>
        <fullName evidence="6">MEF2B neighbor</fullName>
    </alternativeName>
</protein>
<evidence type="ECO:0000269" key="1">
    <source>
    </source>
</evidence>
<evidence type="ECO:0000269" key="2">
    <source>
    </source>
</evidence>
<evidence type="ECO:0000303" key="3">
    <source>
    </source>
</evidence>
<evidence type="ECO:0000305" key="4"/>
<evidence type="ECO:0000305" key="5">
    <source>
    </source>
</evidence>
<evidence type="ECO:0000312" key="6">
    <source>
        <dbReference type="HGNC" id="HGNC:37247"/>
    </source>
</evidence>
<evidence type="ECO:0007744" key="7">
    <source>
    </source>
</evidence>
<sequence length="119" mass="13403">MEEPEMQLKGKKVTDKFTESVYVLANEPSVALYRLQEHVRRSLPELAQHKADMQRWEEQSQGAIYTVEYACSAVKNLVDSSVYFRSVEGLLKQAISIRDHMNASAQGHSPEEPPPPSSA</sequence>
<gene>
    <name evidence="6" type="primary">BORCS8</name>
    <name evidence="6" type="synonym">MEF2BNB</name>
</gene>
<keyword id="KW-0025">Alternative splicing</keyword>
<keyword id="KW-0225">Disease variant</keyword>
<keyword id="KW-0991">Intellectual disability</keyword>
<keyword id="KW-0458">Lysosome</keyword>
<keyword id="KW-0472">Membrane</keyword>
<keyword id="KW-0523">Neurodegeneration</keyword>
<keyword id="KW-0597">Phosphoprotein</keyword>
<keyword id="KW-1267">Proteomics identification</keyword>
<keyword id="KW-1185">Reference proteome</keyword>
<reference key="1">
    <citation type="journal article" date="2004" name="Genome Res.">
        <title>The status, quality, and expansion of the NIH full-length cDNA project: the Mammalian Gene Collection (MGC).</title>
        <authorList>
            <consortium name="The MGC Project Team"/>
        </authorList>
    </citation>
    <scope>NUCLEOTIDE SEQUENCE [LARGE SCALE MRNA] (ISOFORMS 1 AND 2)</scope>
    <source>
        <tissue>Brain</tissue>
        <tissue>Lung carcinoma</tissue>
    </source>
</reference>
<reference key="2">
    <citation type="journal article" date="2013" name="J. Proteome Res.">
        <title>Toward a comprehensive characterization of a human cancer cell phosphoproteome.</title>
        <authorList>
            <person name="Zhou H."/>
            <person name="Di Palma S."/>
            <person name="Preisinger C."/>
            <person name="Peng M."/>
            <person name="Polat A.N."/>
            <person name="Heck A.J."/>
            <person name="Mohammed S."/>
        </authorList>
    </citation>
    <scope>PHOSPHORYLATION [LARGE SCALE ANALYSIS] AT SER-109</scope>
    <scope>IDENTIFICATION BY MASS SPECTROMETRY [LARGE SCALE ANALYSIS]</scope>
    <source>
        <tissue>Cervix carcinoma</tissue>
    </source>
</reference>
<reference key="3">
    <citation type="journal article" date="2015" name="Dev. Cell">
        <title>BORC, a multisubunit complex that regulates lysosome positioning.</title>
        <authorList>
            <person name="Pu J."/>
            <person name="Schindler C."/>
            <person name="Jia R."/>
            <person name="Jarnik M."/>
            <person name="Backlund P."/>
            <person name="Bonifacino J.S."/>
        </authorList>
    </citation>
    <scope>FUNCTION</scope>
    <scope>IDENTIFICATION OF THE BORC COMPLEX</scope>
    <scope>SUBCELLULAR LOCATION</scope>
</reference>
<reference key="4">
    <citation type="journal article" date="2024" name="Brain">
        <title>Biallelic BORCS8 variants cause an infantile-onset neurodegenerative disorder with altered lysosome dynamics.</title>
        <authorList>
            <person name="De Pace R."/>
            <person name="Maroofian R."/>
            <person name="Paimboeuf A."/>
            <person name="Zamani M."/>
            <person name="Zaki M.S."/>
            <person name="Sadeghian S."/>
            <person name="Azizimalamiri R."/>
            <person name="Galehdari H."/>
            <person name="Zeighami J."/>
            <person name="Williamson C.D."/>
            <person name="Fleming E."/>
            <person name="Zhou D."/>
            <person name="Gannon J.L."/>
            <person name="Thiffault I."/>
            <person name="Roze E."/>
            <person name="Suri M."/>
            <person name="Zifarelli G."/>
            <person name="Bauer P."/>
            <person name="Houlden H."/>
            <person name="Severino M."/>
            <person name="Patten S.A."/>
            <person name="Farrow E."/>
            <person name="Bonifacino J.S."/>
        </authorList>
    </citation>
    <scope>VARIANTS NDOABA PRO-29; PRO-42 AND PRO-66</scope>
    <scope>INVOLVEMENT IN NDOABA</scope>
    <scope>CHARACTERIZATION OF VARIANTS NDOABA PRO-29; PRO-42 AND PRO-66</scope>
    <scope>FUNCTION</scope>
</reference>